<organism>
    <name type="scientific">Aquifex aeolicus (strain VF5)</name>
    <dbReference type="NCBI Taxonomy" id="224324"/>
    <lineage>
        <taxon>Bacteria</taxon>
        <taxon>Pseudomonadati</taxon>
        <taxon>Aquificota</taxon>
        <taxon>Aquificia</taxon>
        <taxon>Aquificales</taxon>
        <taxon>Aquificaceae</taxon>
        <taxon>Aquifex</taxon>
    </lineage>
</organism>
<proteinExistence type="inferred from homology"/>
<evidence type="ECO:0000255" key="1">
    <source>
        <dbReference type="HAMAP-Rule" id="MF_00248"/>
    </source>
</evidence>
<name>HSLV_AQUAE</name>
<protein>
    <recommendedName>
        <fullName evidence="1">ATP-dependent protease subunit HslV</fullName>
        <ecNumber evidence="1">3.4.25.2</ecNumber>
    </recommendedName>
</protein>
<feature type="chain" id="PRO_0000148076" description="ATP-dependent protease subunit HslV">
    <location>
        <begin position="1"/>
        <end position="176"/>
    </location>
</feature>
<feature type="active site" evidence="1">
    <location>
        <position position="6"/>
    </location>
</feature>
<feature type="binding site" evidence="1">
    <location>
        <position position="161"/>
    </location>
    <ligand>
        <name>Na(+)</name>
        <dbReference type="ChEBI" id="CHEBI:29101"/>
    </ligand>
</feature>
<feature type="binding site" evidence="1">
    <location>
        <position position="164"/>
    </location>
    <ligand>
        <name>Na(+)</name>
        <dbReference type="ChEBI" id="CHEBI:29101"/>
    </ligand>
</feature>
<feature type="binding site" evidence="1">
    <location>
        <position position="167"/>
    </location>
    <ligand>
        <name>Na(+)</name>
        <dbReference type="ChEBI" id="CHEBI:29101"/>
    </ligand>
</feature>
<sequence>MEVKATTILAVRRDGKTAVGGDGQVTLGSSVIKHTARKIRKLYKGQVIVGFAGSAADGLALMERLEAKLEEYRGNLLKASVQLAKDWRMDKYLRRLEALLLAVDREHMLLISGNGDIIEPDEPVLAIGSGGDYARAAALALYRNTDLSAREIVEKSLKIASEICIYTNDKFVIEEI</sequence>
<gene>
    <name evidence="1" type="primary">hslV</name>
    <name type="ordered locus">aq_1671</name>
</gene>
<comment type="function">
    <text evidence="1">Protease subunit of a proteasome-like degradation complex believed to be a general protein degrading machinery.</text>
</comment>
<comment type="catalytic activity">
    <reaction evidence="1">
        <text>ATP-dependent cleavage of peptide bonds with broad specificity.</text>
        <dbReference type="EC" id="3.4.25.2"/>
    </reaction>
</comment>
<comment type="activity regulation">
    <text evidence="1">Allosterically activated by HslU binding.</text>
</comment>
<comment type="subunit">
    <text evidence="1">A double ring-shaped homohexamer of HslV is capped on each side by a ring-shaped HslU homohexamer. The assembly of the HslU/HslV complex is dependent on binding of ATP.</text>
</comment>
<comment type="subcellular location">
    <subcellularLocation>
        <location evidence="1">Cytoplasm</location>
    </subcellularLocation>
</comment>
<comment type="similarity">
    <text evidence="1">Belongs to the peptidase T1B family. HslV subfamily.</text>
</comment>
<keyword id="KW-0021">Allosteric enzyme</keyword>
<keyword id="KW-0963">Cytoplasm</keyword>
<keyword id="KW-0378">Hydrolase</keyword>
<keyword id="KW-0479">Metal-binding</keyword>
<keyword id="KW-0645">Protease</keyword>
<keyword id="KW-1185">Reference proteome</keyword>
<keyword id="KW-0915">Sodium</keyword>
<keyword id="KW-0888">Threonine protease</keyword>
<dbReference type="EC" id="3.4.25.2" evidence="1"/>
<dbReference type="EMBL" id="AE000657">
    <property type="protein sequence ID" value="AAC07551.1"/>
    <property type="molecule type" value="Genomic_DNA"/>
</dbReference>
<dbReference type="PIR" id="B70445">
    <property type="entry name" value="B70445"/>
</dbReference>
<dbReference type="RefSeq" id="NP_214153.1">
    <property type="nucleotide sequence ID" value="NC_000918.1"/>
</dbReference>
<dbReference type="RefSeq" id="WP_010881090.1">
    <property type="nucleotide sequence ID" value="NC_000918.1"/>
</dbReference>
<dbReference type="SMR" id="O67587"/>
<dbReference type="FunCoup" id="O67587">
    <property type="interactions" value="321"/>
</dbReference>
<dbReference type="STRING" id="224324.aq_1671"/>
<dbReference type="EnsemblBacteria" id="AAC07551">
    <property type="protein sequence ID" value="AAC07551"/>
    <property type="gene ID" value="aq_1671"/>
</dbReference>
<dbReference type="KEGG" id="aae:aq_1671"/>
<dbReference type="PATRIC" id="fig|224324.8.peg.1294"/>
<dbReference type="eggNOG" id="COG5405">
    <property type="taxonomic scope" value="Bacteria"/>
</dbReference>
<dbReference type="HOGENOM" id="CLU_093872_1_0_0"/>
<dbReference type="InParanoid" id="O67587"/>
<dbReference type="OrthoDB" id="9804884at2"/>
<dbReference type="Proteomes" id="UP000000798">
    <property type="component" value="Chromosome"/>
</dbReference>
<dbReference type="GO" id="GO:0005737">
    <property type="term" value="C:cytoplasm"/>
    <property type="evidence" value="ECO:0000318"/>
    <property type="project" value="GO_Central"/>
</dbReference>
<dbReference type="GO" id="GO:0009376">
    <property type="term" value="C:HslUV protease complex"/>
    <property type="evidence" value="ECO:0007669"/>
    <property type="project" value="UniProtKB-UniRule"/>
</dbReference>
<dbReference type="GO" id="GO:0005839">
    <property type="term" value="C:proteasome core complex"/>
    <property type="evidence" value="ECO:0007669"/>
    <property type="project" value="InterPro"/>
</dbReference>
<dbReference type="GO" id="GO:0046872">
    <property type="term" value="F:metal ion binding"/>
    <property type="evidence" value="ECO:0007669"/>
    <property type="project" value="UniProtKB-KW"/>
</dbReference>
<dbReference type="GO" id="GO:0004298">
    <property type="term" value="F:threonine-type endopeptidase activity"/>
    <property type="evidence" value="ECO:0007669"/>
    <property type="project" value="UniProtKB-KW"/>
</dbReference>
<dbReference type="GO" id="GO:0051603">
    <property type="term" value="P:proteolysis involved in protein catabolic process"/>
    <property type="evidence" value="ECO:0000318"/>
    <property type="project" value="GO_Central"/>
</dbReference>
<dbReference type="Gene3D" id="3.60.20.10">
    <property type="entry name" value="Glutamine Phosphoribosylpyrophosphate, subunit 1, domain 1"/>
    <property type="match status" value="1"/>
</dbReference>
<dbReference type="HAMAP" id="MF_00248">
    <property type="entry name" value="HslV"/>
    <property type="match status" value="1"/>
</dbReference>
<dbReference type="InterPro" id="IPR022281">
    <property type="entry name" value="ATP-dep_Prtase_HsIV_su"/>
</dbReference>
<dbReference type="InterPro" id="IPR029055">
    <property type="entry name" value="Ntn_hydrolases_N"/>
</dbReference>
<dbReference type="InterPro" id="IPR001353">
    <property type="entry name" value="Proteasome_sua/b"/>
</dbReference>
<dbReference type="InterPro" id="IPR023333">
    <property type="entry name" value="Proteasome_suB-type"/>
</dbReference>
<dbReference type="NCBIfam" id="TIGR03692">
    <property type="entry name" value="ATP_dep_HslV"/>
    <property type="match status" value="1"/>
</dbReference>
<dbReference type="NCBIfam" id="NF003964">
    <property type="entry name" value="PRK05456.1"/>
    <property type="match status" value="1"/>
</dbReference>
<dbReference type="PANTHER" id="PTHR32194:SF0">
    <property type="entry name" value="ATP-DEPENDENT PROTEASE SUBUNIT HSLV"/>
    <property type="match status" value="1"/>
</dbReference>
<dbReference type="PANTHER" id="PTHR32194">
    <property type="entry name" value="METALLOPROTEASE TLDD"/>
    <property type="match status" value="1"/>
</dbReference>
<dbReference type="Pfam" id="PF00227">
    <property type="entry name" value="Proteasome"/>
    <property type="match status" value="1"/>
</dbReference>
<dbReference type="PIRSF" id="PIRSF039093">
    <property type="entry name" value="HslV"/>
    <property type="match status" value="1"/>
</dbReference>
<dbReference type="SUPFAM" id="SSF56235">
    <property type="entry name" value="N-terminal nucleophile aminohydrolases (Ntn hydrolases)"/>
    <property type="match status" value="1"/>
</dbReference>
<dbReference type="PROSITE" id="PS51476">
    <property type="entry name" value="PROTEASOME_BETA_2"/>
    <property type="match status" value="1"/>
</dbReference>
<accession>O67587</accession>
<reference key="1">
    <citation type="journal article" date="1998" name="Nature">
        <title>The complete genome of the hyperthermophilic bacterium Aquifex aeolicus.</title>
        <authorList>
            <person name="Deckert G."/>
            <person name="Warren P.V."/>
            <person name="Gaasterland T."/>
            <person name="Young W.G."/>
            <person name="Lenox A.L."/>
            <person name="Graham D.E."/>
            <person name="Overbeek R."/>
            <person name="Snead M.A."/>
            <person name="Keller M."/>
            <person name="Aujay M."/>
            <person name="Huber R."/>
            <person name="Feldman R.A."/>
            <person name="Short J.M."/>
            <person name="Olsen G.J."/>
            <person name="Swanson R.V."/>
        </authorList>
    </citation>
    <scope>NUCLEOTIDE SEQUENCE [LARGE SCALE GENOMIC DNA]</scope>
    <source>
        <strain>VF5</strain>
    </source>
</reference>